<evidence type="ECO:0000255" key="1">
    <source>
        <dbReference type="HAMAP-Rule" id="MF_00145"/>
    </source>
</evidence>
<reference key="1">
    <citation type="submission" date="2006-12" db="EMBL/GenBank/DDBJ databases">
        <title>Complete sequence of chromosome 1 of Acidovorax sp. JS42.</title>
        <authorList>
            <person name="Copeland A."/>
            <person name="Lucas S."/>
            <person name="Lapidus A."/>
            <person name="Barry K."/>
            <person name="Detter J.C."/>
            <person name="Glavina del Rio T."/>
            <person name="Dalin E."/>
            <person name="Tice H."/>
            <person name="Pitluck S."/>
            <person name="Chertkov O."/>
            <person name="Brettin T."/>
            <person name="Bruce D."/>
            <person name="Han C."/>
            <person name="Tapia R."/>
            <person name="Gilna P."/>
            <person name="Schmutz J."/>
            <person name="Larimer F."/>
            <person name="Land M."/>
            <person name="Hauser L."/>
            <person name="Kyrpides N."/>
            <person name="Kim E."/>
            <person name="Stahl D."/>
            <person name="Richardson P."/>
        </authorList>
    </citation>
    <scope>NUCLEOTIDE SEQUENCE [LARGE SCALE GENOMIC DNA]</scope>
    <source>
        <strain>JS42</strain>
    </source>
</reference>
<gene>
    <name evidence="1" type="primary">pgk</name>
    <name type="ordered locus">Ajs_4056</name>
</gene>
<dbReference type="EC" id="2.7.2.3" evidence="1"/>
<dbReference type="EMBL" id="CP000539">
    <property type="protein sequence ID" value="ABM44160.1"/>
    <property type="molecule type" value="Genomic_DNA"/>
</dbReference>
<dbReference type="SMR" id="A1WD35"/>
<dbReference type="STRING" id="232721.Ajs_4056"/>
<dbReference type="KEGG" id="ajs:Ajs_4056"/>
<dbReference type="eggNOG" id="COG0126">
    <property type="taxonomic scope" value="Bacteria"/>
</dbReference>
<dbReference type="HOGENOM" id="CLU_025427_0_2_4"/>
<dbReference type="UniPathway" id="UPA00109">
    <property type="reaction ID" value="UER00185"/>
</dbReference>
<dbReference type="Proteomes" id="UP000000645">
    <property type="component" value="Chromosome"/>
</dbReference>
<dbReference type="GO" id="GO:0005829">
    <property type="term" value="C:cytosol"/>
    <property type="evidence" value="ECO:0007669"/>
    <property type="project" value="TreeGrafter"/>
</dbReference>
<dbReference type="GO" id="GO:0043531">
    <property type="term" value="F:ADP binding"/>
    <property type="evidence" value="ECO:0007669"/>
    <property type="project" value="TreeGrafter"/>
</dbReference>
<dbReference type="GO" id="GO:0005524">
    <property type="term" value="F:ATP binding"/>
    <property type="evidence" value="ECO:0007669"/>
    <property type="project" value="UniProtKB-KW"/>
</dbReference>
<dbReference type="GO" id="GO:0004618">
    <property type="term" value="F:phosphoglycerate kinase activity"/>
    <property type="evidence" value="ECO:0007669"/>
    <property type="project" value="UniProtKB-UniRule"/>
</dbReference>
<dbReference type="GO" id="GO:0006094">
    <property type="term" value="P:gluconeogenesis"/>
    <property type="evidence" value="ECO:0007669"/>
    <property type="project" value="TreeGrafter"/>
</dbReference>
<dbReference type="GO" id="GO:0006096">
    <property type="term" value="P:glycolytic process"/>
    <property type="evidence" value="ECO:0007669"/>
    <property type="project" value="UniProtKB-UniRule"/>
</dbReference>
<dbReference type="FunFam" id="3.40.50.1260:FF:000001">
    <property type="entry name" value="Phosphoglycerate kinase"/>
    <property type="match status" value="1"/>
</dbReference>
<dbReference type="FunFam" id="3.40.50.1260:FF:000002">
    <property type="entry name" value="Phosphoglycerate kinase"/>
    <property type="match status" value="1"/>
</dbReference>
<dbReference type="Gene3D" id="3.40.50.1260">
    <property type="entry name" value="Phosphoglycerate kinase, N-terminal domain"/>
    <property type="match status" value="2"/>
</dbReference>
<dbReference type="HAMAP" id="MF_00145">
    <property type="entry name" value="Phosphoglyc_kinase"/>
    <property type="match status" value="1"/>
</dbReference>
<dbReference type="InterPro" id="IPR001576">
    <property type="entry name" value="Phosphoglycerate_kinase"/>
</dbReference>
<dbReference type="InterPro" id="IPR015911">
    <property type="entry name" value="Phosphoglycerate_kinase_CS"/>
</dbReference>
<dbReference type="InterPro" id="IPR015824">
    <property type="entry name" value="Phosphoglycerate_kinase_N"/>
</dbReference>
<dbReference type="InterPro" id="IPR036043">
    <property type="entry name" value="Phosphoglycerate_kinase_sf"/>
</dbReference>
<dbReference type="PANTHER" id="PTHR11406">
    <property type="entry name" value="PHOSPHOGLYCERATE KINASE"/>
    <property type="match status" value="1"/>
</dbReference>
<dbReference type="PANTHER" id="PTHR11406:SF23">
    <property type="entry name" value="PHOSPHOGLYCERATE KINASE 1, CHLOROPLASTIC-RELATED"/>
    <property type="match status" value="1"/>
</dbReference>
<dbReference type="Pfam" id="PF00162">
    <property type="entry name" value="PGK"/>
    <property type="match status" value="1"/>
</dbReference>
<dbReference type="PIRSF" id="PIRSF000724">
    <property type="entry name" value="Pgk"/>
    <property type="match status" value="1"/>
</dbReference>
<dbReference type="PRINTS" id="PR00477">
    <property type="entry name" value="PHGLYCKINASE"/>
</dbReference>
<dbReference type="SUPFAM" id="SSF53748">
    <property type="entry name" value="Phosphoglycerate kinase"/>
    <property type="match status" value="1"/>
</dbReference>
<dbReference type="PROSITE" id="PS00111">
    <property type="entry name" value="PGLYCERATE_KINASE"/>
    <property type="match status" value="1"/>
</dbReference>
<sequence>MHILRFSDLCAQGQARGQRVFIRADLNVPQDDAGRITEDTRIRASVPCIQMALEAGAAVMVTSHLGRPTEGEFKPEDSLAPVAQRLSELLGREVPLVADWVDGVQVQPGQVVLLENCRVNKGEKKNDPELAKKMAQLCDIYVNDAFGTAHRAEGTTYGIAEYAKVACAGPLLAAEIDAIQTALAHPKRPLVAIVAGSKVSTKLTILQSLSKNVDGLVVGGGIANTFMLAAGLPIGKSLAEPDLVNEAKAVIAAMAARGAEVPIPTDVVVAKAFAADAPATVKKASEVAEDDLILDIGPETAAQLAAQLKAAGTIVWNGPVGVFEFDQFAGGTKAIAQAIAESSAFSIAGGGDTLAAIAKYGIEKDVGYISTGGGAFLEVLEGKTLPAIEILQKRAAG</sequence>
<protein>
    <recommendedName>
        <fullName evidence="1">Phosphoglycerate kinase</fullName>
        <ecNumber evidence="1">2.7.2.3</ecNumber>
    </recommendedName>
</protein>
<keyword id="KW-0067">ATP-binding</keyword>
<keyword id="KW-0963">Cytoplasm</keyword>
<keyword id="KW-0324">Glycolysis</keyword>
<keyword id="KW-0418">Kinase</keyword>
<keyword id="KW-0547">Nucleotide-binding</keyword>
<keyword id="KW-0808">Transferase</keyword>
<accession>A1WD35</accession>
<comment type="catalytic activity">
    <reaction evidence="1">
        <text>(2R)-3-phosphoglycerate + ATP = (2R)-3-phospho-glyceroyl phosphate + ADP</text>
        <dbReference type="Rhea" id="RHEA:14801"/>
        <dbReference type="ChEBI" id="CHEBI:30616"/>
        <dbReference type="ChEBI" id="CHEBI:57604"/>
        <dbReference type="ChEBI" id="CHEBI:58272"/>
        <dbReference type="ChEBI" id="CHEBI:456216"/>
        <dbReference type="EC" id="2.7.2.3"/>
    </reaction>
</comment>
<comment type="pathway">
    <text evidence="1">Carbohydrate degradation; glycolysis; pyruvate from D-glyceraldehyde 3-phosphate: step 2/5.</text>
</comment>
<comment type="subunit">
    <text evidence="1">Monomer.</text>
</comment>
<comment type="subcellular location">
    <subcellularLocation>
        <location evidence="1">Cytoplasm</location>
    </subcellularLocation>
</comment>
<comment type="similarity">
    <text evidence="1">Belongs to the phosphoglycerate kinase family.</text>
</comment>
<name>PGK_ACISJ</name>
<feature type="chain" id="PRO_1000009602" description="Phosphoglycerate kinase">
    <location>
        <begin position="1"/>
        <end position="397"/>
    </location>
</feature>
<feature type="binding site" evidence="1">
    <location>
        <begin position="25"/>
        <end position="27"/>
    </location>
    <ligand>
        <name>substrate</name>
    </ligand>
</feature>
<feature type="binding site" evidence="1">
    <location>
        <position position="41"/>
    </location>
    <ligand>
        <name>substrate</name>
    </ligand>
</feature>
<feature type="binding site" evidence="1">
    <location>
        <begin position="64"/>
        <end position="67"/>
    </location>
    <ligand>
        <name>substrate</name>
    </ligand>
</feature>
<feature type="binding site" evidence="1">
    <location>
        <position position="118"/>
    </location>
    <ligand>
        <name>substrate</name>
    </ligand>
</feature>
<feature type="binding site" evidence="1">
    <location>
        <position position="151"/>
    </location>
    <ligand>
        <name>substrate</name>
    </ligand>
</feature>
<feature type="binding site" evidence="1">
    <location>
        <position position="202"/>
    </location>
    <ligand>
        <name>ATP</name>
        <dbReference type="ChEBI" id="CHEBI:30616"/>
    </ligand>
</feature>
<feature type="binding site" evidence="1">
    <location>
        <position position="324"/>
    </location>
    <ligand>
        <name>ATP</name>
        <dbReference type="ChEBI" id="CHEBI:30616"/>
    </ligand>
</feature>
<feature type="binding site" evidence="1">
    <location>
        <begin position="350"/>
        <end position="353"/>
    </location>
    <ligand>
        <name>ATP</name>
        <dbReference type="ChEBI" id="CHEBI:30616"/>
    </ligand>
</feature>
<proteinExistence type="inferred from homology"/>
<organism>
    <name type="scientific">Acidovorax sp. (strain JS42)</name>
    <dbReference type="NCBI Taxonomy" id="232721"/>
    <lineage>
        <taxon>Bacteria</taxon>
        <taxon>Pseudomonadati</taxon>
        <taxon>Pseudomonadota</taxon>
        <taxon>Betaproteobacteria</taxon>
        <taxon>Burkholderiales</taxon>
        <taxon>Comamonadaceae</taxon>
        <taxon>Acidovorax</taxon>
    </lineage>
</organism>